<dbReference type="EC" id="1.3.5.2" evidence="1"/>
<dbReference type="EMBL" id="CP001074">
    <property type="protein sequence ID" value="ACE89601.1"/>
    <property type="molecule type" value="Genomic_DNA"/>
</dbReference>
<dbReference type="SMR" id="B3PNN8"/>
<dbReference type="KEGG" id="rec:RHECIAT_CH0000610"/>
<dbReference type="eggNOG" id="COG0167">
    <property type="taxonomic scope" value="Bacteria"/>
</dbReference>
<dbReference type="HOGENOM" id="CLU_013640_2_1_5"/>
<dbReference type="UniPathway" id="UPA00070">
    <property type="reaction ID" value="UER00946"/>
</dbReference>
<dbReference type="Proteomes" id="UP000008817">
    <property type="component" value="Chromosome"/>
</dbReference>
<dbReference type="GO" id="GO:0005737">
    <property type="term" value="C:cytoplasm"/>
    <property type="evidence" value="ECO:0007669"/>
    <property type="project" value="InterPro"/>
</dbReference>
<dbReference type="GO" id="GO:0005886">
    <property type="term" value="C:plasma membrane"/>
    <property type="evidence" value="ECO:0007669"/>
    <property type="project" value="UniProtKB-SubCell"/>
</dbReference>
<dbReference type="GO" id="GO:0106430">
    <property type="term" value="F:dihydroorotate dehydrogenase (quinone) activity"/>
    <property type="evidence" value="ECO:0007669"/>
    <property type="project" value="UniProtKB-EC"/>
</dbReference>
<dbReference type="GO" id="GO:0006207">
    <property type="term" value="P:'de novo' pyrimidine nucleobase biosynthetic process"/>
    <property type="evidence" value="ECO:0007669"/>
    <property type="project" value="InterPro"/>
</dbReference>
<dbReference type="GO" id="GO:0044205">
    <property type="term" value="P:'de novo' UMP biosynthetic process"/>
    <property type="evidence" value="ECO:0007669"/>
    <property type="project" value="UniProtKB-UniRule"/>
</dbReference>
<dbReference type="CDD" id="cd04738">
    <property type="entry name" value="DHOD_2_like"/>
    <property type="match status" value="1"/>
</dbReference>
<dbReference type="Gene3D" id="3.20.20.70">
    <property type="entry name" value="Aldolase class I"/>
    <property type="match status" value="1"/>
</dbReference>
<dbReference type="HAMAP" id="MF_00225">
    <property type="entry name" value="DHO_dh_type2"/>
    <property type="match status" value="1"/>
</dbReference>
<dbReference type="InterPro" id="IPR013785">
    <property type="entry name" value="Aldolase_TIM"/>
</dbReference>
<dbReference type="InterPro" id="IPR050074">
    <property type="entry name" value="DHO_dehydrogenase"/>
</dbReference>
<dbReference type="InterPro" id="IPR005719">
    <property type="entry name" value="Dihydroorotate_DH_2"/>
</dbReference>
<dbReference type="InterPro" id="IPR005720">
    <property type="entry name" value="Dihydroorotate_DH_cat"/>
</dbReference>
<dbReference type="InterPro" id="IPR001295">
    <property type="entry name" value="Dihydroorotate_DH_CS"/>
</dbReference>
<dbReference type="NCBIfam" id="NF003645">
    <property type="entry name" value="PRK05286.1-2"/>
    <property type="match status" value="1"/>
</dbReference>
<dbReference type="NCBIfam" id="NF003652">
    <property type="entry name" value="PRK05286.2-5"/>
    <property type="match status" value="1"/>
</dbReference>
<dbReference type="NCBIfam" id="TIGR01036">
    <property type="entry name" value="pyrD_sub2"/>
    <property type="match status" value="1"/>
</dbReference>
<dbReference type="PANTHER" id="PTHR48109:SF4">
    <property type="entry name" value="DIHYDROOROTATE DEHYDROGENASE (QUINONE), MITOCHONDRIAL"/>
    <property type="match status" value="1"/>
</dbReference>
<dbReference type="PANTHER" id="PTHR48109">
    <property type="entry name" value="DIHYDROOROTATE DEHYDROGENASE (QUINONE), MITOCHONDRIAL-RELATED"/>
    <property type="match status" value="1"/>
</dbReference>
<dbReference type="Pfam" id="PF01180">
    <property type="entry name" value="DHO_dh"/>
    <property type="match status" value="1"/>
</dbReference>
<dbReference type="SUPFAM" id="SSF51395">
    <property type="entry name" value="FMN-linked oxidoreductases"/>
    <property type="match status" value="1"/>
</dbReference>
<dbReference type="PROSITE" id="PS00911">
    <property type="entry name" value="DHODEHASE_1"/>
    <property type="match status" value="1"/>
</dbReference>
<dbReference type="PROSITE" id="PS00912">
    <property type="entry name" value="DHODEHASE_2"/>
    <property type="match status" value="1"/>
</dbReference>
<keyword id="KW-1003">Cell membrane</keyword>
<keyword id="KW-0285">Flavoprotein</keyword>
<keyword id="KW-0288">FMN</keyword>
<keyword id="KW-0472">Membrane</keyword>
<keyword id="KW-0560">Oxidoreductase</keyword>
<keyword id="KW-0665">Pyrimidine biosynthesis</keyword>
<protein>
    <recommendedName>
        <fullName evidence="1">Dihydroorotate dehydrogenase (quinone)</fullName>
        <ecNumber evidence="1">1.3.5.2</ecNumber>
    </recommendedName>
    <alternativeName>
        <fullName evidence="1">DHOdehase</fullName>
        <shortName evidence="1">DHOD</shortName>
        <shortName evidence="1">DHODase</shortName>
    </alternativeName>
    <alternativeName>
        <fullName evidence="1">Dihydroorotate oxidase</fullName>
    </alternativeName>
</protein>
<proteinExistence type="inferred from homology"/>
<sequence length="362" mass="38943">MIDPFKRLARKGLFLFDPETAHGMSIAALKSGLVPACQITPDPRLRQTVAGLTFENPLGMAAGYDKNAEVPEALLRLGFGFTEIGTVTPRPQSGNPRPRIFRLVEDEAVINRLGFNNEGHEAAFERLSALTGKGVVGVNIGANKDSEDRITDYVAGIRCFYSVARYFTANISSPNTPGLRDLQARESLAALLSAVLAARDEMAERSGRKIPVFLKIAPDLTEEGMDDIAAEALAHPLDGLIVSNTTLSREGLKDQRQAKETGGLSGVPLFEKSTAVLARMRKRVGAALPIIGVGGVSSAETALEKIRAGADLVQLYSCMVYEGPGLPGNIVRGLSGLLDREKAGSIRELRDSRLDYWAARKV</sequence>
<organism>
    <name type="scientific">Rhizobium etli (strain CIAT 652)</name>
    <dbReference type="NCBI Taxonomy" id="491916"/>
    <lineage>
        <taxon>Bacteria</taxon>
        <taxon>Pseudomonadati</taxon>
        <taxon>Pseudomonadota</taxon>
        <taxon>Alphaproteobacteria</taxon>
        <taxon>Hyphomicrobiales</taxon>
        <taxon>Rhizobiaceae</taxon>
        <taxon>Rhizobium/Agrobacterium group</taxon>
        <taxon>Rhizobium</taxon>
    </lineage>
</organism>
<name>PYRD_RHIE6</name>
<feature type="chain" id="PRO_1000100277" description="Dihydroorotate dehydrogenase (quinone)">
    <location>
        <begin position="1"/>
        <end position="362"/>
    </location>
</feature>
<feature type="active site" description="Nucleophile" evidence="1">
    <location>
        <position position="173"/>
    </location>
</feature>
<feature type="binding site" evidence="1">
    <location>
        <begin position="62"/>
        <end position="66"/>
    </location>
    <ligand>
        <name>FMN</name>
        <dbReference type="ChEBI" id="CHEBI:58210"/>
    </ligand>
</feature>
<feature type="binding site" evidence="1">
    <location>
        <position position="66"/>
    </location>
    <ligand>
        <name>substrate</name>
    </ligand>
</feature>
<feature type="binding site" evidence="1">
    <location>
        <position position="86"/>
    </location>
    <ligand>
        <name>FMN</name>
        <dbReference type="ChEBI" id="CHEBI:58210"/>
    </ligand>
</feature>
<feature type="binding site" evidence="1">
    <location>
        <begin position="111"/>
        <end position="115"/>
    </location>
    <ligand>
        <name>substrate</name>
    </ligand>
</feature>
<feature type="binding site" evidence="1">
    <location>
        <position position="139"/>
    </location>
    <ligand>
        <name>FMN</name>
        <dbReference type="ChEBI" id="CHEBI:58210"/>
    </ligand>
</feature>
<feature type="binding site" evidence="1">
    <location>
        <position position="170"/>
    </location>
    <ligand>
        <name>FMN</name>
        <dbReference type="ChEBI" id="CHEBI:58210"/>
    </ligand>
</feature>
<feature type="binding site" evidence="1">
    <location>
        <position position="170"/>
    </location>
    <ligand>
        <name>substrate</name>
    </ligand>
</feature>
<feature type="binding site" evidence="1">
    <location>
        <position position="175"/>
    </location>
    <ligand>
        <name>substrate</name>
    </ligand>
</feature>
<feature type="binding site" evidence="1">
    <location>
        <position position="215"/>
    </location>
    <ligand>
        <name>FMN</name>
        <dbReference type="ChEBI" id="CHEBI:58210"/>
    </ligand>
</feature>
<feature type="binding site" evidence="1">
    <location>
        <position position="243"/>
    </location>
    <ligand>
        <name>FMN</name>
        <dbReference type="ChEBI" id="CHEBI:58210"/>
    </ligand>
</feature>
<feature type="binding site" evidence="1">
    <location>
        <begin position="244"/>
        <end position="245"/>
    </location>
    <ligand>
        <name>substrate</name>
    </ligand>
</feature>
<feature type="binding site" evidence="1">
    <location>
        <position position="266"/>
    </location>
    <ligand>
        <name>FMN</name>
        <dbReference type="ChEBI" id="CHEBI:58210"/>
    </ligand>
</feature>
<feature type="binding site" evidence="1">
    <location>
        <position position="295"/>
    </location>
    <ligand>
        <name>FMN</name>
        <dbReference type="ChEBI" id="CHEBI:58210"/>
    </ligand>
</feature>
<feature type="binding site" evidence="1">
    <location>
        <begin position="316"/>
        <end position="317"/>
    </location>
    <ligand>
        <name>FMN</name>
        <dbReference type="ChEBI" id="CHEBI:58210"/>
    </ligand>
</feature>
<comment type="function">
    <text evidence="1">Catalyzes the conversion of dihydroorotate to orotate with quinone as electron acceptor.</text>
</comment>
<comment type="catalytic activity">
    <reaction evidence="1">
        <text>(S)-dihydroorotate + a quinone = orotate + a quinol</text>
        <dbReference type="Rhea" id="RHEA:30187"/>
        <dbReference type="ChEBI" id="CHEBI:24646"/>
        <dbReference type="ChEBI" id="CHEBI:30839"/>
        <dbReference type="ChEBI" id="CHEBI:30864"/>
        <dbReference type="ChEBI" id="CHEBI:132124"/>
        <dbReference type="EC" id="1.3.5.2"/>
    </reaction>
</comment>
<comment type="cofactor">
    <cofactor evidence="1">
        <name>FMN</name>
        <dbReference type="ChEBI" id="CHEBI:58210"/>
    </cofactor>
    <text evidence="1">Binds 1 FMN per subunit.</text>
</comment>
<comment type="pathway">
    <text evidence="1">Pyrimidine metabolism; UMP biosynthesis via de novo pathway; orotate from (S)-dihydroorotate (quinone route): step 1/1.</text>
</comment>
<comment type="subunit">
    <text evidence="1">Monomer.</text>
</comment>
<comment type="subcellular location">
    <subcellularLocation>
        <location evidence="1">Cell membrane</location>
        <topology evidence="1">Peripheral membrane protein</topology>
    </subcellularLocation>
</comment>
<comment type="similarity">
    <text evidence="1">Belongs to the dihydroorotate dehydrogenase family. Type 2 subfamily.</text>
</comment>
<gene>
    <name evidence="1" type="primary">pyrD</name>
    <name type="ordered locus">RHECIAT_CH0000610</name>
</gene>
<evidence type="ECO:0000255" key="1">
    <source>
        <dbReference type="HAMAP-Rule" id="MF_00225"/>
    </source>
</evidence>
<reference key="1">
    <citation type="journal article" date="2010" name="Appl. Environ. Microbiol.">
        <title>Conserved symbiotic plasmid DNA sequences in the multireplicon pangenomic structure of Rhizobium etli.</title>
        <authorList>
            <person name="Gonzalez V."/>
            <person name="Acosta J.L."/>
            <person name="Santamaria R.I."/>
            <person name="Bustos P."/>
            <person name="Fernandez J.L."/>
            <person name="Hernandez Gonzalez I.L."/>
            <person name="Diaz R."/>
            <person name="Flores M."/>
            <person name="Palacios R."/>
            <person name="Mora J."/>
            <person name="Davila G."/>
        </authorList>
    </citation>
    <scope>NUCLEOTIDE SEQUENCE [LARGE SCALE GENOMIC DNA]</scope>
    <source>
        <strain>CIAT 652</strain>
    </source>
</reference>
<accession>B3PNN8</accession>